<reference key="1">
    <citation type="journal article" date="2000" name="Antimicrob. Agents Chemother.">
        <title>Identification of the novobiocin biosynthetic gene cluster of Streptomyces spheroides NCIB 11891.</title>
        <authorList>
            <person name="Steffensky M."/>
            <person name="Muhlenweg A."/>
            <person name="Wang Z.X."/>
            <person name="Li S.M."/>
            <person name="Heide L."/>
        </authorList>
    </citation>
    <scope>NUCLEOTIDE SEQUENCE [GENOMIC DNA]</scope>
    <source>
        <strain>ATCC 23965 / DSM 40292 / JCM 4252 / NBRC 12917 / NCIMB 11891 / NRRL 2449</strain>
    </source>
</reference>
<reference key="2">
    <citation type="journal article" date="2001" name="Chem. Biol.">
        <title>Coumarin formation in novobiocin biosynthesis: beta-hydroxylation of the aminoacyl enzyme tyrosyl-S-NovH by a cytochrome P450 NovI.</title>
        <authorList>
            <person name="Chen H."/>
            <person name="Walsh C.T."/>
        </authorList>
    </citation>
    <scope>FUNCTION</scope>
    <scope>PATHWAY</scope>
    <source>
        <strain>ATCC 23965 / DSM 40292 / JCM 4252 / NBRC 12917 / NCIMB 11891 / NRRL 2449</strain>
    </source>
</reference>
<evidence type="ECO:0000250" key="1"/>
<evidence type="ECO:0000269" key="2">
    <source>
    </source>
</evidence>
<evidence type="ECO:0000305" key="3"/>
<comment type="function">
    <text evidence="2">Together with NovH, involved in the formation of a beta-OH-Tyr intermediate in the novobiocin biosynthesis pathway, an aminocoumarin family antibiotic that targets bacterial DNA gyrases. Acts as a cytochrome P450-type monooxygenase with specificity for the tyrosyl-S-NovH acyl enzyme (L-Tyr-S-NovH) to form the beta-OH-Tyr intermediate (L-beta-OH-Tyr-S-NovH).</text>
</comment>
<comment type="cofactor">
    <cofactor evidence="1">
        <name>heme</name>
        <dbReference type="ChEBI" id="CHEBI:30413"/>
    </cofactor>
</comment>
<comment type="pathway">
    <text evidence="2">Antibiotic biosynthesis; novobiocin biosynthesis.</text>
</comment>
<comment type="similarity">
    <text evidence="3">Belongs to the cytochrome P450 family.</text>
</comment>
<sequence>MSTRPTVSPSELEQIDLASPVLHAEYELDEIFRHLRADEPVYWQQPRNEQPGFWVISRHADVNEVYKDKEHFTTEHGNALATLLTGGDSASGAMLAVTDGVRHHQVRNVLSRGFSARMLDLIAHTLQETVDGLLLAALERGECDAAQDIAADVPLGAICDLLEIPHADRKYLLGLTSHAWSTDYADEPPEESWVAKNEILLYFSKLLKERRGGVREDMVSLLANCRIDGDPLKAAEQMANCYGLMIGGDETGRHAITGTILALIQNPDQWRALKNGDVDLNTATEEALRWTVPSLHGGRKATGDVVINGRRINAGDVVSVWISSANRDETVFDAPDEFNLARTPNKHFTFAYGSHYCLGHYLGRMEVYAVLDGLRRLVGDLEQIGEERWIYSSILHGMSSLPIRITG</sequence>
<name>NOVI_STRNV</name>
<feature type="chain" id="PRO_0000423999" description="Cytochrome P450 NovI">
    <location>
        <begin position="1"/>
        <end position="407"/>
    </location>
</feature>
<feature type="binding site" description="axial binding residue" evidence="1">
    <location>
        <position position="357"/>
    </location>
    <ligand>
        <name>heme</name>
        <dbReference type="ChEBI" id="CHEBI:30413"/>
    </ligand>
    <ligandPart>
        <name>Fe</name>
        <dbReference type="ChEBI" id="CHEBI:18248"/>
    </ligandPart>
</feature>
<gene>
    <name type="primary">novI</name>
</gene>
<organism>
    <name type="scientific">Streptomyces niveus</name>
    <name type="common">Streptomyces spheroides</name>
    <dbReference type="NCBI Taxonomy" id="193462"/>
    <lineage>
        <taxon>Bacteria</taxon>
        <taxon>Bacillati</taxon>
        <taxon>Actinomycetota</taxon>
        <taxon>Actinomycetes</taxon>
        <taxon>Kitasatosporales</taxon>
        <taxon>Streptomycetaceae</taxon>
        <taxon>Streptomyces</taxon>
    </lineage>
</organism>
<dbReference type="EC" id="1.14.-.-"/>
<dbReference type="EMBL" id="AF170880">
    <property type="protein sequence ID" value="AAF67502.1"/>
    <property type="molecule type" value="Genomic_DNA"/>
</dbReference>
<dbReference type="RefSeq" id="WP_069626139.1">
    <property type="nucleotide sequence ID" value="NZ_JBFBNV010000009.1"/>
</dbReference>
<dbReference type="SMR" id="Q9L9F9"/>
<dbReference type="KEGG" id="ag:AAF67502"/>
<dbReference type="BioCyc" id="MetaCyc:MONOMER-18085"/>
<dbReference type="UniPathway" id="UPA01035"/>
<dbReference type="GO" id="GO:0036199">
    <property type="term" value="F:cholest-4-en-3-one 26-monooxygenase activity"/>
    <property type="evidence" value="ECO:0007669"/>
    <property type="project" value="TreeGrafter"/>
</dbReference>
<dbReference type="GO" id="GO:0020037">
    <property type="term" value="F:heme binding"/>
    <property type="evidence" value="ECO:0007669"/>
    <property type="project" value="InterPro"/>
</dbReference>
<dbReference type="GO" id="GO:0005506">
    <property type="term" value="F:iron ion binding"/>
    <property type="evidence" value="ECO:0007669"/>
    <property type="project" value="InterPro"/>
</dbReference>
<dbReference type="GO" id="GO:0004497">
    <property type="term" value="F:monooxygenase activity"/>
    <property type="evidence" value="ECO:0000314"/>
    <property type="project" value="UniProtKB"/>
</dbReference>
<dbReference type="GO" id="GO:0008395">
    <property type="term" value="F:steroid hydroxylase activity"/>
    <property type="evidence" value="ECO:0007669"/>
    <property type="project" value="TreeGrafter"/>
</dbReference>
<dbReference type="GO" id="GO:0006707">
    <property type="term" value="P:cholesterol catabolic process"/>
    <property type="evidence" value="ECO:0007669"/>
    <property type="project" value="TreeGrafter"/>
</dbReference>
<dbReference type="GO" id="GO:0043642">
    <property type="term" value="P:novobiocin biosynthetic process"/>
    <property type="evidence" value="ECO:0000314"/>
    <property type="project" value="UniProtKB"/>
</dbReference>
<dbReference type="CDD" id="cd11033">
    <property type="entry name" value="CYP142-like"/>
    <property type="match status" value="1"/>
</dbReference>
<dbReference type="FunFam" id="1.10.630.10:FF:000376">
    <property type="entry name" value="Cytochrome P450 NovI"/>
    <property type="match status" value="1"/>
</dbReference>
<dbReference type="Gene3D" id="1.10.630.10">
    <property type="entry name" value="Cytochrome P450"/>
    <property type="match status" value="1"/>
</dbReference>
<dbReference type="InterPro" id="IPR001128">
    <property type="entry name" value="Cyt_P450"/>
</dbReference>
<dbReference type="InterPro" id="IPR002397">
    <property type="entry name" value="Cyt_P450_B"/>
</dbReference>
<dbReference type="InterPro" id="IPR036396">
    <property type="entry name" value="Cyt_P450_sf"/>
</dbReference>
<dbReference type="PANTHER" id="PTHR46696:SF4">
    <property type="entry name" value="BIOTIN BIOSYNTHESIS CYTOCHROME P450"/>
    <property type="match status" value="1"/>
</dbReference>
<dbReference type="PANTHER" id="PTHR46696">
    <property type="entry name" value="P450, PUTATIVE (EUROFUNG)-RELATED"/>
    <property type="match status" value="1"/>
</dbReference>
<dbReference type="Pfam" id="PF00067">
    <property type="entry name" value="p450"/>
    <property type="match status" value="1"/>
</dbReference>
<dbReference type="PRINTS" id="PR00359">
    <property type="entry name" value="BP450"/>
</dbReference>
<dbReference type="SUPFAM" id="SSF48264">
    <property type="entry name" value="Cytochrome P450"/>
    <property type="match status" value="1"/>
</dbReference>
<keyword id="KW-0349">Heme</keyword>
<keyword id="KW-0408">Iron</keyword>
<keyword id="KW-0479">Metal-binding</keyword>
<keyword id="KW-0503">Monooxygenase</keyword>
<keyword id="KW-0560">Oxidoreductase</keyword>
<proteinExistence type="inferred from homology"/>
<accession>Q9L9F9</accession>
<protein>
    <recommendedName>
        <fullName>Cytochrome P450 NovI</fullName>
        <ecNumber>1.14.-.-</ecNumber>
    </recommendedName>
    <alternativeName>
        <fullName>Novobiocin biosynthesis protein I</fullName>
    </alternativeName>
</protein>